<organism>
    <name type="scientific">Xanthomonas campestris pv. campestris (strain 8004)</name>
    <dbReference type="NCBI Taxonomy" id="314565"/>
    <lineage>
        <taxon>Bacteria</taxon>
        <taxon>Pseudomonadati</taxon>
        <taxon>Pseudomonadota</taxon>
        <taxon>Gammaproteobacteria</taxon>
        <taxon>Lysobacterales</taxon>
        <taxon>Lysobacteraceae</taxon>
        <taxon>Xanthomonas</taxon>
    </lineage>
</organism>
<feature type="chain" id="PRO_0000302462" description="Glycine cleavage system H protein">
    <location>
        <begin position="1"/>
        <end position="131"/>
    </location>
</feature>
<feature type="domain" description="Lipoyl-binding" evidence="2">
    <location>
        <begin position="24"/>
        <end position="106"/>
    </location>
</feature>
<feature type="modified residue" description="N6-lipoyllysine" evidence="1">
    <location>
        <position position="65"/>
    </location>
</feature>
<evidence type="ECO:0000255" key="1">
    <source>
        <dbReference type="HAMAP-Rule" id="MF_00272"/>
    </source>
</evidence>
<evidence type="ECO:0000255" key="2">
    <source>
        <dbReference type="PROSITE-ProRule" id="PRU01066"/>
    </source>
</evidence>
<dbReference type="EMBL" id="CP000050">
    <property type="protein sequence ID" value="AAY48302.1"/>
    <property type="molecule type" value="Genomic_DNA"/>
</dbReference>
<dbReference type="RefSeq" id="WP_011038001.1">
    <property type="nucleotide sequence ID" value="NZ_CP155948.1"/>
</dbReference>
<dbReference type="SMR" id="Q4UXC1"/>
<dbReference type="GeneID" id="58012520"/>
<dbReference type="KEGG" id="xcb:XC_1233"/>
<dbReference type="HOGENOM" id="CLU_097408_2_0_6"/>
<dbReference type="Proteomes" id="UP000000420">
    <property type="component" value="Chromosome"/>
</dbReference>
<dbReference type="GO" id="GO:0005829">
    <property type="term" value="C:cytosol"/>
    <property type="evidence" value="ECO:0007669"/>
    <property type="project" value="TreeGrafter"/>
</dbReference>
<dbReference type="GO" id="GO:0005960">
    <property type="term" value="C:glycine cleavage complex"/>
    <property type="evidence" value="ECO:0007669"/>
    <property type="project" value="InterPro"/>
</dbReference>
<dbReference type="GO" id="GO:0019464">
    <property type="term" value="P:glycine decarboxylation via glycine cleavage system"/>
    <property type="evidence" value="ECO:0007669"/>
    <property type="project" value="UniProtKB-UniRule"/>
</dbReference>
<dbReference type="CDD" id="cd06848">
    <property type="entry name" value="GCS_H"/>
    <property type="match status" value="1"/>
</dbReference>
<dbReference type="Gene3D" id="2.40.50.100">
    <property type="match status" value="1"/>
</dbReference>
<dbReference type="HAMAP" id="MF_00272">
    <property type="entry name" value="GcvH"/>
    <property type="match status" value="1"/>
</dbReference>
<dbReference type="InterPro" id="IPR003016">
    <property type="entry name" value="2-oxoA_DH_lipoyl-BS"/>
</dbReference>
<dbReference type="InterPro" id="IPR000089">
    <property type="entry name" value="Biotin_lipoyl"/>
</dbReference>
<dbReference type="InterPro" id="IPR002930">
    <property type="entry name" value="GCV_H"/>
</dbReference>
<dbReference type="InterPro" id="IPR033753">
    <property type="entry name" value="GCV_H/Fam206"/>
</dbReference>
<dbReference type="InterPro" id="IPR017453">
    <property type="entry name" value="GCV_H_sub"/>
</dbReference>
<dbReference type="InterPro" id="IPR011053">
    <property type="entry name" value="Single_hybrid_motif"/>
</dbReference>
<dbReference type="NCBIfam" id="TIGR00527">
    <property type="entry name" value="gcvH"/>
    <property type="match status" value="1"/>
</dbReference>
<dbReference type="NCBIfam" id="NF002270">
    <property type="entry name" value="PRK01202.1"/>
    <property type="match status" value="1"/>
</dbReference>
<dbReference type="PANTHER" id="PTHR11715">
    <property type="entry name" value="GLYCINE CLEAVAGE SYSTEM H PROTEIN"/>
    <property type="match status" value="1"/>
</dbReference>
<dbReference type="PANTHER" id="PTHR11715:SF3">
    <property type="entry name" value="GLYCINE CLEAVAGE SYSTEM H PROTEIN-RELATED"/>
    <property type="match status" value="1"/>
</dbReference>
<dbReference type="Pfam" id="PF01597">
    <property type="entry name" value="GCV_H"/>
    <property type="match status" value="1"/>
</dbReference>
<dbReference type="SUPFAM" id="SSF51230">
    <property type="entry name" value="Single hybrid motif"/>
    <property type="match status" value="1"/>
</dbReference>
<dbReference type="PROSITE" id="PS50968">
    <property type="entry name" value="BIOTINYL_LIPOYL"/>
    <property type="match status" value="1"/>
</dbReference>
<dbReference type="PROSITE" id="PS00189">
    <property type="entry name" value="LIPOYL"/>
    <property type="match status" value="1"/>
</dbReference>
<sequence length="131" mass="13997">MSEIPGDLKFLKSHEWARVEGNGRVTVGISDHAQGLLGDLVYVELPAVGDTVQAGNGAAVVESVKAASDVYSPVTGTVVEVNASLSDKPETINEDAYGEGWIFVVEIDDKEQLNELLAPDDYAELLEDDAH</sequence>
<name>GCSH_XANC8</name>
<accession>Q4UXC1</accession>
<reference key="1">
    <citation type="journal article" date="2005" name="Genome Res.">
        <title>Comparative and functional genomic analyses of the pathogenicity of phytopathogen Xanthomonas campestris pv. campestris.</title>
        <authorList>
            <person name="Qian W."/>
            <person name="Jia Y."/>
            <person name="Ren S.-X."/>
            <person name="He Y.-Q."/>
            <person name="Feng J.-X."/>
            <person name="Lu L.-F."/>
            <person name="Sun Q."/>
            <person name="Ying G."/>
            <person name="Tang D.-J."/>
            <person name="Tang H."/>
            <person name="Wu W."/>
            <person name="Hao P."/>
            <person name="Wang L."/>
            <person name="Jiang B.-L."/>
            <person name="Zeng S."/>
            <person name="Gu W.-Y."/>
            <person name="Lu G."/>
            <person name="Rong L."/>
            <person name="Tian Y."/>
            <person name="Yao Z."/>
            <person name="Fu G."/>
            <person name="Chen B."/>
            <person name="Fang R."/>
            <person name="Qiang B."/>
            <person name="Chen Z."/>
            <person name="Zhao G.-P."/>
            <person name="Tang J.-L."/>
            <person name="He C."/>
        </authorList>
    </citation>
    <scope>NUCLEOTIDE SEQUENCE [LARGE SCALE GENOMIC DNA]</scope>
    <source>
        <strain>8004</strain>
    </source>
</reference>
<gene>
    <name evidence="1" type="primary">gcvH</name>
    <name type="ordered locus">XC_1233</name>
</gene>
<proteinExistence type="inferred from homology"/>
<protein>
    <recommendedName>
        <fullName evidence="1">Glycine cleavage system H protein</fullName>
    </recommendedName>
</protein>
<comment type="function">
    <text evidence="1">The glycine cleavage system catalyzes the degradation of glycine. The H protein shuttles the methylamine group of glycine from the P protein to the T protein.</text>
</comment>
<comment type="cofactor">
    <cofactor evidence="1">
        <name>(R)-lipoate</name>
        <dbReference type="ChEBI" id="CHEBI:83088"/>
    </cofactor>
    <text evidence="1">Binds 1 lipoyl cofactor covalently.</text>
</comment>
<comment type="subunit">
    <text evidence="1">The glycine cleavage system is composed of four proteins: P, T, L and H.</text>
</comment>
<comment type="similarity">
    <text evidence="1">Belongs to the GcvH family.</text>
</comment>
<keyword id="KW-0450">Lipoyl</keyword>